<reference key="1">
    <citation type="journal article" date="2001" name="Nature">
        <title>Genome sequence and gene compaction of the eukaryote parasite Encephalitozoon cuniculi.</title>
        <authorList>
            <person name="Katinka M.D."/>
            <person name="Duprat S."/>
            <person name="Cornillot E."/>
            <person name="Metenier G."/>
            <person name="Thomarat F."/>
            <person name="Prensier G."/>
            <person name="Barbe V."/>
            <person name="Peyretaillade E."/>
            <person name="Brottier P."/>
            <person name="Wincker P."/>
            <person name="Delbac F."/>
            <person name="El Alaoui H."/>
            <person name="Peyret P."/>
            <person name="Saurin W."/>
            <person name="Gouy M."/>
            <person name="Weissenbach J."/>
            <person name="Vivares C.P."/>
        </authorList>
    </citation>
    <scope>NUCLEOTIDE SEQUENCE [LARGE SCALE GENOMIC DNA]</scope>
    <source>
        <strain>GB-M1</strain>
    </source>
</reference>
<reference key="2">
    <citation type="journal article" date="2007" name="BMC Genomics">
        <title>The complement of protein kinases of the microsporidium Encephalitozoon cuniculi in relation to those of Saccharomyces cerevisiae and Schizosaccharomyces pombe.</title>
        <authorList>
            <person name="Miranda-Saavedra D."/>
            <person name="Stark M.J.R."/>
            <person name="Packer J.C."/>
            <person name="Vivares C.P."/>
            <person name="Doerig C."/>
            <person name="Barton G.J."/>
        </authorList>
    </citation>
    <scope>PREDICTION OF FUNCTION</scope>
</reference>
<proteinExistence type="inferred from homology"/>
<protein>
    <recommendedName>
        <fullName>Serine/threonine-protein kinase MPS1</fullName>
        <ecNumber evidence="2">2.7.12.2</ecNumber>
    </recommendedName>
    <alternativeName>
        <fullName>Monopolar spindle protein 1</fullName>
    </alternativeName>
</protein>
<dbReference type="EC" id="2.7.12.2" evidence="2"/>
<dbReference type="EMBL" id="AL590442">
    <property type="protein sequence ID" value="CAD25082.1"/>
    <property type="molecule type" value="Genomic_DNA"/>
</dbReference>
<dbReference type="RefSeq" id="NP_584578.1">
    <property type="nucleotide sequence ID" value="NM_001040767.1"/>
</dbReference>
<dbReference type="SMR" id="Q8SSH4"/>
<dbReference type="STRING" id="284813.Q8SSH4"/>
<dbReference type="GeneID" id="858568"/>
<dbReference type="KEGG" id="ecu:ECU02_0510"/>
<dbReference type="VEuPathDB" id="MicrosporidiaDB:ECU02_0510"/>
<dbReference type="HOGENOM" id="CLU_466934_0_0_1"/>
<dbReference type="InParanoid" id="Q8SSH4"/>
<dbReference type="OMA" id="KVINIEM"/>
<dbReference type="OrthoDB" id="20524at2759"/>
<dbReference type="Proteomes" id="UP000000819">
    <property type="component" value="Chromosome II"/>
</dbReference>
<dbReference type="GO" id="GO:0000776">
    <property type="term" value="C:kinetochore"/>
    <property type="evidence" value="ECO:0007669"/>
    <property type="project" value="TreeGrafter"/>
</dbReference>
<dbReference type="GO" id="GO:0005634">
    <property type="term" value="C:nucleus"/>
    <property type="evidence" value="ECO:0007669"/>
    <property type="project" value="TreeGrafter"/>
</dbReference>
<dbReference type="GO" id="GO:0005524">
    <property type="term" value="F:ATP binding"/>
    <property type="evidence" value="ECO:0007669"/>
    <property type="project" value="UniProtKB-KW"/>
</dbReference>
<dbReference type="GO" id="GO:0004708">
    <property type="term" value="F:MAP kinase kinase activity"/>
    <property type="evidence" value="ECO:0007669"/>
    <property type="project" value="UniProtKB-EC"/>
</dbReference>
<dbReference type="GO" id="GO:0106310">
    <property type="term" value="F:protein serine kinase activity"/>
    <property type="evidence" value="ECO:0007669"/>
    <property type="project" value="RHEA"/>
</dbReference>
<dbReference type="GO" id="GO:0004674">
    <property type="term" value="F:protein serine/threonine kinase activity"/>
    <property type="evidence" value="ECO:0007669"/>
    <property type="project" value="UniProtKB-KW"/>
</dbReference>
<dbReference type="GO" id="GO:0004713">
    <property type="term" value="F:protein tyrosine kinase activity"/>
    <property type="evidence" value="ECO:0007669"/>
    <property type="project" value="RHEA"/>
</dbReference>
<dbReference type="GO" id="GO:0033316">
    <property type="term" value="P:meiotic spindle assembly checkpoint signaling"/>
    <property type="evidence" value="ECO:0007669"/>
    <property type="project" value="TreeGrafter"/>
</dbReference>
<dbReference type="GO" id="GO:0007094">
    <property type="term" value="P:mitotic spindle assembly checkpoint signaling"/>
    <property type="evidence" value="ECO:0007669"/>
    <property type="project" value="TreeGrafter"/>
</dbReference>
<dbReference type="GO" id="GO:0098813">
    <property type="term" value="P:nuclear chromosome segregation"/>
    <property type="evidence" value="ECO:0007669"/>
    <property type="project" value="UniProtKB-ARBA"/>
</dbReference>
<dbReference type="GO" id="GO:0034501">
    <property type="term" value="P:protein localization to kinetochore"/>
    <property type="evidence" value="ECO:0007669"/>
    <property type="project" value="TreeGrafter"/>
</dbReference>
<dbReference type="CDD" id="cd14131">
    <property type="entry name" value="PKc_Mps1"/>
    <property type="match status" value="1"/>
</dbReference>
<dbReference type="FunFam" id="3.30.200.20:FF:000131">
    <property type="entry name" value="Dual specificity protein kinase TTK"/>
    <property type="match status" value="1"/>
</dbReference>
<dbReference type="Gene3D" id="3.30.200.20">
    <property type="entry name" value="Phosphorylase Kinase, domain 1"/>
    <property type="match status" value="1"/>
</dbReference>
<dbReference type="Gene3D" id="1.25.40.10">
    <property type="entry name" value="Tetratricopeptide repeat domain"/>
    <property type="match status" value="1"/>
</dbReference>
<dbReference type="Gene3D" id="1.10.510.10">
    <property type="entry name" value="Transferase(Phosphotransferase) domain 1"/>
    <property type="match status" value="1"/>
</dbReference>
<dbReference type="InterPro" id="IPR011009">
    <property type="entry name" value="Kinase-like_dom_sf"/>
</dbReference>
<dbReference type="InterPro" id="IPR027084">
    <property type="entry name" value="Mps1_cat"/>
</dbReference>
<dbReference type="InterPro" id="IPR000719">
    <property type="entry name" value="Prot_kinase_dom"/>
</dbReference>
<dbReference type="InterPro" id="IPR017441">
    <property type="entry name" value="Protein_kinase_ATP_BS"/>
</dbReference>
<dbReference type="InterPro" id="IPR008271">
    <property type="entry name" value="Ser/Thr_kinase_AS"/>
</dbReference>
<dbReference type="InterPro" id="IPR011990">
    <property type="entry name" value="TPR-like_helical_dom_sf"/>
</dbReference>
<dbReference type="PANTHER" id="PTHR22974:SF21">
    <property type="entry name" value="DUAL SPECIFICITY PROTEIN KINASE TTK"/>
    <property type="match status" value="1"/>
</dbReference>
<dbReference type="PANTHER" id="PTHR22974">
    <property type="entry name" value="MIXED LINEAGE PROTEIN KINASE"/>
    <property type="match status" value="1"/>
</dbReference>
<dbReference type="Pfam" id="PF00069">
    <property type="entry name" value="Pkinase"/>
    <property type="match status" value="1"/>
</dbReference>
<dbReference type="SMART" id="SM00220">
    <property type="entry name" value="S_TKc"/>
    <property type="match status" value="1"/>
</dbReference>
<dbReference type="SUPFAM" id="SSF56112">
    <property type="entry name" value="Protein kinase-like (PK-like)"/>
    <property type="match status" value="1"/>
</dbReference>
<dbReference type="PROSITE" id="PS00107">
    <property type="entry name" value="PROTEIN_KINASE_ATP"/>
    <property type="match status" value="1"/>
</dbReference>
<dbReference type="PROSITE" id="PS50011">
    <property type="entry name" value="PROTEIN_KINASE_DOM"/>
    <property type="match status" value="1"/>
</dbReference>
<dbReference type="PROSITE" id="PS00108">
    <property type="entry name" value="PROTEIN_KINASE_ST"/>
    <property type="match status" value="1"/>
</dbReference>
<accession>Q8SSH4</accession>
<evidence type="ECO:0000250" key="1">
    <source>
        <dbReference type="UniProtKB" id="O94235"/>
    </source>
</evidence>
<evidence type="ECO:0000250" key="2">
    <source>
        <dbReference type="UniProtKB" id="P54199"/>
    </source>
</evidence>
<evidence type="ECO:0000255" key="3">
    <source>
        <dbReference type="PROSITE-ProRule" id="PRU00159"/>
    </source>
</evidence>
<evidence type="ECO:0000255" key="4">
    <source>
        <dbReference type="PROSITE-ProRule" id="PRU10027"/>
    </source>
</evidence>
<evidence type="ECO:0000256" key="5">
    <source>
        <dbReference type="SAM" id="MobiDB-lite"/>
    </source>
</evidence>
<keyword id="KW-0067">ATP-binding</keyword>
<keyword id="KW-0418">Kinase</keyword>
<keyword id="KW-0547">Nucleotide-binding</keyword>
<keyword id="KW-1185">Reference proteome</keyword>
<keyword id="KW-0723">Serine/threonine-protein kinase</keyword>
<keyword id="KW-0808">Transferase</keyword>
<gene>
    <name type="primary">MPS1</name>
    <name type="ordered locus">ECU02_0510</name>
</gene>
<feature type="chain" id="PRO_0000384424" description="Serine/threonine-protein kinase MPS1">
    <location>
        <begin position="1"/>
        <end position="586"/>
    </location>
</feature>
<feature type="domain" description="Protein kinase" evidence="3">
    <location>
        <begin position="289"/>
        <end position="540"/>
    </location>
</feature>
<feature type="region of interest" description="Disordered" evidence="5">
    <location>
        <begin position="167"/>
        <end position="223"/>
    </location>
</feature>
<feature type="compositionally biased region" description="Basic and acidic residues" evidence="5">
    <location>
        <begin position="167"/>
        <end position="188"/>
    </location>
</feature>
<feature type="compositionally biased region" description="Basic and acidic residues" evidence="5">
    <location>
        <begin position="199"/>
        <end position="217"/>
    </location>
</feature>
<feature type="active site" description="Proton acceptor" evidence="3 4">
    <location>
        <position position="407"/>
    </location>
</feature>
<feature type="binding site" evidence="3">
    <location>
        <begin position="295"/>
        <end position="303"/>
    </location>
    <ligand>
        <name>ATP</name>
        <dbReference type="ChEBI" id="CHEBI:30616"/>
    </ligand>
</feature>
<feature type="binding site" evidence="3">
    <location>
        <position position="316"/>
    </location>
    <ligand>
        <name>ATP</name>
        <dbReference type="ChEBI" id="CHEBI:30616"/>
    </ligand>
</feature>
<name>MPS1_ENCCU</name>
<sequence length="586" mass="66976">MEGIFNSKSLYEYLEEQKQAGISKTKEISLYYKATSKSVGDDEYSLRIWLDYIRLLMDGTKDVTEARETFKMIKMRFCKFYNYWEAYVRFEIEAGNGSLCKILQHSIDFVKVKEFTEKKRVLEYLECVMSYARNGEDLSVFCRGPETSFKPGAQVLSPFEARIGEQSKNKVLKKEHEESGPGHRDDGKNLLSRSGRAHLAPDECKENDNKNRAREDGASLSPSFAAKSKNCGATFGTIPIRFEKEDYSQGITMEINAALGRTSPEGSNSSPRSGAVRSRERIIIKGREIEILKQIGKGGSSKVYKVLFGSNVYALKRVELIGDEKMLSSYINEINLLYKFKGTSEIVEIIDHEVGEDYLHILLEYGETDLSKIIRKGGLSMNFIKDVWEQMLLIVKRVHIERIIHCDLKPANFLFVKGRVKLIDFGISKVIRNDTTSILSEEQCGTVNYMSPEAVTQNKSKVARSSDIWSLGCILYEMVHSNPPLHEYPNLIQKIQRLQEYSEFKYTSKNKAAVMVMKECLARDPKKRPTIDNLLNHRFLTGEMCLESLRELVEKILKIDGGDRVDPEHVDRIAEQLHSTHRQDQA</sequence>
<comment type="function">
    <text evidence="1">Involved in mitotic spindle assembly checkpoint signaling, a process that delays anaphase until chromosomes are bioriented on the spindle, and in the repair of incorrect mitotic kinetochore-spindle microtubule attachments.</text>
</comment>
<comment type="catalytic activity">
    <reaction evidence="2">
        <text>L-seryl-[protein] + ATP = O-phospho-L-seryl-[protein] + ADP + H(+)</text>
        <dbReference type="Rhea" id="RHEA:17989"/>
        <dbReference type="Rhea" id="RHEA-COMP:9863"/>
        <dbReference type="Rhea" id="RHEA-COMP:11604"/>
        <dbReference type="ChEBI" id="CHEBI:15378"/>
        <dbReference type="ChEBI" id="CHEBI:29999"/>
        <dbReference type="ChEBI" id="CHEBI:30616"/>
        <dbReference type="ChEBI" id="CHEBI:83421"/>
        <dbReference type="ChEBI" id="CHEBI:456216"/>
        <dbReference type="EC" id="2.7.12.2"/>
    </reaction>
</comment>
<comment type="catalytic activity">
    <reaction evidence="2">
        <text>L-threonyl-[protein] + ATP = O-phospho-L-threonyl-[protein] + ADP + H(+)</text>
        <dbReference type="Rhea" id="RHEA:46608"/>
        <dbReference type="Rhea" id="RHEA-COMP:11060"/>
        <dbReference type="Rhea" id="RHEA-COMP:11605"/>
        <dbReference type="ChEBI" id="CHEBI:15378"/>
        <dbReference type="ChEBI" id="CHEBI:30013"/>
        <dbReference type="ChEBI" id="CHEBI:30616"/>
        <dbReference type="ChEBI" id="CHEBI:61977"/>
        <dbReference type="ChEBI" id="CHEBI:456216"/>
        <dbReference type="EC" id="2.7.12.2"/>
    </reaction>
</comment>
<comment type="catalytic activity">
    <reaction>
        <text>L-tyrosyl-[protein] + ATP = O-phospho-L-tyrosyl-[protein] + ADP + H(+)</text>
        <dbReference type="Rhea" id="RHEA:10596"/>
        <dbReference type="Rhea" id="RHEA-COMP:10136"/>
        <dbReference type="Rhea" id="RHEA-COMP:20101"/>
        <dbReference type="ChEBI" id="CHEBI:15378"/>
        <dbReference type="ChEBI" id="CHEBI:30616"/>
        <dbReference type="ChEBI" id="CHEBI:46858"/>
        <dbReference type="ChEBI" id="CHEBI:61978"/>
        <dbReference type="ChEBI" id="CHEBI:456216"/>
        <dbReference type="EC" id="2.7.12.2"/>
    </reaction>
</comment>
<comment type="similarity">
    <text evidence="3">Belongs to the protein kinase superfamily. Ser/Thr protein kinase family.</text>
</comment>
<organism>
    <name type="scientific">Encephalitozoon cuniculi (strain GB-M1)</name>
    <name type="common">Microsporidian parasite</name>
    <dbReference type="NCBI Taxonomy" id="284813"/>
    <lineage>
        <taxon>Eukaryota</taxon>
        <taxon>Fungi</taxon>
        <taxon>Fungi incertae sedis</taxon>
        <taxon>Microsporidia</taxon>
        <taxon>Unikaryonidae</taxon>
        <taxon>Encephalitozoon</taxon>
    </lineage>
</organism>